<reference key="1">
    <citation type="journal article" date="2000" name="Mol. Phylogenet. Evol.">
        <title>Phylogenetic relationships of elapid snakes based on cytochrome b mtDNA sequences.</title>
        <authorList>
            <person name="Slowinski J.B."/>
            <person name="Keogh J.S."/>
        </authorList>
    </citation>
    <scope>NUCLEOTIDE SEQUENCE [GENOMIC DNA]</scope>
</reference>
<name>CYB_TOXPR</name>
<keyword id="KW-0249">Electron transport</keyword>
<keyword id="KW-0349">Heme</keyword>
<keyword id="KW-0408">Iron</keyword>
<keyword id="KW-0472">Membrane</keyword>
<keyword id="KW-0479">Metal-binding</keyword>
<keyword id="KW-0496">Mitochondrion</keyword>
<keyword id="KW-0999">Mitochondrion inner membrane</keyword>
<keyword id="KW-0679">Respiratory chain</keyword>
<keyword id="KW-0812">Transmembrane</keyword>
<keyword id="KW-1133">Transmembrane helix</keyword>
<keyword id="KW-0813">Transport</keyword>
<keyword id="KW-0830">Ubiquinone</keyword>
<dbReference type="EMBL" id="AF217825">
    <property type="protein sequence ID" value="AAF37244.1"/>
    <property type="molecule type" value="Genomic_DNA"/>
</dbReference>
<dbReference type="SMR" id="Q9MLK3"/>
<dbReference type="GO" id="GO:0005743">
    <property type="term" value="C:mitochondrial inner membrane"/>
    <property type="evidence" value="ECO:0007669"/>
    <property type="project" value="UniProtKB-SubCell"/>
</dbReference>
<dbReference type="GO" id="GO:0045275">
    <property type="term" value="C:respiratory chain complex III"/>
    <property type="evidence" value="ECO:0007669"/>
    <property type="project" value="InterPro"/>
</dbReference>
<dbReference type="GO" id="GO:0046872">
    <property type="term" value="F:metal ion binding"/>
    <property type="evidence" value="ECO:0007669"/>
    <property type="project" value="UniProtKB-KW"/>
</dbReference>
<dbReference type="GO" id="GO:0008121">
    <property type="term" value="F:ubiquinol-cytochrome-c reductase activity"/>
    <property type="evidence" value="ECO:0007669"/>
    <property type="project" value="InterPro"/>
</dbReference>
<dbReference type="GO" id="GO:0006122">
    <property type="term" value="P:mitochondrial electron transport, ubiquinol to cytochrome c"/>
    <property type="evidence" value="ECO:0007669"/>
    <property type="project" value="TreeGrafter"/>
</dbReference>
<dbReference type="CDD" id="cd00290">
    <property type="entry name" value="cytochrome_b_C"/>
    <property type="match status" value="1"/>
</dbReference>
<dbReference type="CDD" id="cd00284">
    <property type="entry name" value="Cytochrome_b_N"/>
    <property type="match status" value="1"/>
</dbReference>
<dbReference type="Gene3D" id="1.20.810.10">
    <property type="entry name" value="Cytochrome Bc1 Complex, Chain C"/>
    <property type="match status" value="1"/>
</dbReference>
<dbReference type="InterPro" id="IPR005798">
    <property type="entry name" value="Cyt_b/b6_C"/>
</dbReference>
<dbReference type="InterPro" id="IPR036150">
    <property type="entry name" value="Cyt_b/b6_C_sf"/>
</dbReference>
<dbReference type="InterPro" id="IPR005797">
    <property type="entry name" value="Cyt_b/b6_N"/>
</dbReference>
<dbReference type="InterPro" id="IPR027387">
    <property type="entry name" value="Cytb/b6-like_sf"/>
</dbReference>
<dbReference type="InterPro" id="IPR030689">
    <property type="entry name" value="Cytochrome_b"/>
</dbReference>
<dbReference type="InterPro" id="IPR048260">
    <property type="entry name" value="Cytochrome_b_C_euk/bac"/>
</dbReference>
<dbReference type="InterPro" id="IPR048259">
    <property type="entry name" value="Cytochrome_b_N_euk/bac"/>
</dbReference>
<dbReference type="InterPro" id="IPR016174">
    <property type="entry name" value="Di-haem_cyt_TM"/>
</dbReference>
<dbReference type="PANTHER" id="PTHR19271">
    <property type="entry name" value="CYTOCHROME B"/>
    <property type="match status" value="1"/>
</dbReference>
<dbReference type="PANTHER" id="PTHR19271:SF16">
    <property type="entry name" value="CYTOCHROME B"/>
    <property type="match status" value="1"/>
</dbReference>
<dbReference type="Pfam" id="PF00032">
    <property type="entry name" value="Cytochrom_B_C"/>
    <property type="match status" value="1"/>
</dbReference>
<dbReference type="Pfam" id="PF00033">
    <property type="entry name" value="Cytochrome_B"/>
    <property type="match status" value="1"/>
</dbReference>
<dbReference type="PIRSF" id="PIRSF038885">
    <property type="entry name" value="COB"/>
    <property type="match status" value="1"/>
</dbReference>
<dbReference type="SUPFAM" id="SSF81648">
    <property type="entry name" value="a domain/subunit of cytochrome bc1 complex (Ubiquinol-cytochrome c reductase)"/>
    <property type="match status" value="1"/>
</dbReference>
<dbReference type="SUPFAM" id="SSF81342">
    <property type="entry name" value="Transmembrane di-heme cytochromes"/>
    <property type="match status" value="1"/>
</dbReference>
<dbReference type="PROSITE" id="PS51003">
    <property type="entry name" value="CYTB_CTER"/>
    <property type="match status" value="1"/>
</dbReference>
<dbReference type="PROSITE" id="PS51002">
    <property type="entry name" value="CYTB_NTER"/>
    <property type="match status" value="1"/>
</dbReference>
<comment type="function">
    <text evidence="2">Component of the ubiquinol-cytochrome c reductase complex (complex III or cytochrome b-c1 complex) that is part of the mitochondrial respiratory chain. The b-c1 complex mediates electron transfer from ubiquinol to cytochrome c. Contributes to the generation of a proton gradient across the mitochondrial membrane that is then used for ATP synthesis.</text>
</comment>
<comment type="cofactor">
    <cofactor evidence="2">
        <name>heme b</name>
        <dbReference type="ChEBI" id="CHEBI:60344"/>
    </cofactor>
    <text evidence="2">Binds 2 heme b groups non-covalently.</text>
</comment>
<comment type="subunit">
    <text evidence="2">The cytochrome bc1 complex contains 3 respiratory subunits (MT-CYB, CYC1 and UQCRFS1), 2 core proteins (UQCRC1 and UQCRC2) and probably 6 low-molecular weight proteins.</text>
</comment>
<comment type="subcellular location">
    <subcellularLocation>
        <location evidence="2">Mitochondrion inner membrane</location>
        <topology evidence="2">Multi-pass membrane protein</topology>
    </subcellularLocation>
</comment>
<comment type="miscellaneous">
    <text evidence="1">Heme 1 (or BL or b562) is low-potential and absorbs at about 562 nm, and heme 2 (or BH or b566) is high-potential and absorbs at about 566 nm.</text>
</comment>
<comment type="similarity">
    <text evidence="3 4">Belongs to the cytochrome b family.</text>
</comment>
<comment type="caution">
    <text evidence="2">The full-length protein contains only eight transmembrane helices, not nine as predicted by bioinformatics tools.</text>
</comment>
<geneLocation type="mitochondrion"/>
<organism>
    <name type="scientific">Toxicocalamus preussi</name>
    <name type="common">Preuss's forest snake</name>
    <name type="synonym">Ultrocalamus preussi</name>
    <dbReference type="NCBI Taxonomy" id="111948"/>
    <lineage>
        <taxon>Eukaryota</taxon>
        <taxon>Metazoa</taxon>
        <taxon>Chordata</taxon>
        <taxon>Craniata</taxon>
        <taxon>Vertebrata</taxon>
        <taxon>Euteleostomi</taxon>
        <taxon>Lepidosauria</taxon>
        <taxon>Squamata</taxon>
        <taxon>Bifurcata</taxon>
        <taxon>Unidentata</taxon>
        <taxon>Episquamata</taxon>
        <taxon>Toxicofera</taxon>
        <taxon>Serpentes</taxon>
        <taxon>Colubroidea</taxon>
        <taxon>Elapidae</taxon>
        <taxon>Notechinae</taxon>
        <taxon>Toxicocalamus</taxon>
    </lineage>
</organism>
<proteinExistence type="inferred from homology"/>
<protein>
    <recommendedName>
        <fullName>Cytochrome b</fullName>
    </recommendedName>
    <alternativeName>
        <fullName>Complex III subunit 3</fullName>
    </alternativeName>
    <alternativeName>
        <fullName>Complex III subunit III</fullName>
    </alternativeName>
    <alternativeName>
        <fullName>Cytochrome b-c1 complex subunit 3</fullName>
    </alternativeName>
    <alternativeName>
        <fullName>Ubiquinol-cytochrome-c reductase complex cytochrome b subunit</fullName>
    </alternativeName>
</protein>
<evidence type="ECO:0000250" key="1"/>
<evidence type="ECO:0000250" key="2">
    <source>
        <dbReference type="UniProtKB" id="P00157"/>
    </source>
</evidence>
<evidence type="ECO:0000255" key="3">
    <source>
        <dbReference type="PROSITE-ProRule" id="PRU00967"/>
    </source>
</evidence>
<evidence type="ECO:0000255" key="4">
    <source>
        <dbReference type="PROSITE-ProRule" id="PRU00968"/>
    </source>
</evidence>
<sequence length="371" mass="41993">MPNHHTLLSSSLFPVGSNISTWWNFGSMLLTCTALQISTGFFLAVHYTANINLAFSSIIHITRDVPYGWIMQNLHAIGASLFFLCIYIHIARGLYYGLYMNKGVWLSGTTLLIILMATAFFGYVLPWGQMSFWAATVITNLLTAVPYLGNSLTTWLWGGFSINDPTLTRFFALHFILPFLITSLSSIHIILLHNEGSNNPLGTNSDIDKVPIHPYHSYKDMFMISSMITLLFIVLSFMPDLLNDPENFSKANPMTTPQHIKPEWYFLFAYSILRSIPNKLGGTLALLMSVIILTTTPFTHTSYIRPMTFRPLTQALFWTLIATFITITWTATKQVEPPFTLISQVASVTYFSFFIINPIFGWAENKTMMNN</sequence>
<feature type="chain" id="PRO_0000061673" description="Cytochrome b">
    <location>
        <begin position="1"/>
        <end position="371"/>
    </location>
</feature>
<feature type="transmembrane region" description="Helical" evidence="2">
    <location>
        <begin position="25"/>
        <end position="45"/>
    </location>
</feature>
<feature type="transmembrane region" description="Helical" evidence="2">
    <location>
        <begin position="69"/>
        <end position="90"/>
    </location>
</feature>
<feature type="transmembrane region" description="Helical" evidence="2">
    <location>
        <begin position="105"/>
        <end position="125"/>
    </location>
</feature>
<feature type="transmembrane region" description="Helical" evidence="2">
    <location>
        <begin position="170"/>
        <end position="190"/>
    </location>
</feature>
<feature type="transmembrane region" description="Helical" evidence="2">
    <location>
        <begin position="218"/>
        <end position="238"/>
    </location>
</feature>
<feature type="transmembrane region" description="Helical" evidence="2">
    <location>
        <begin position="280"/>
        <end position="300"/>
    </location>
</feature>
<feature type="transmembrane region" description="Helical" evidence="2">
    <location>
        <begin position="312"/>
        <end position="332"/>
    </location>
</feature>
<feature type="transmembrane region" description="Helical" evidence="2">
    <location>
        <begin position="339"/>
        <end position="358"/>
    </location>
</feature>
<feature type="binding site" description="axial binding residue" evidence="2">
    <location>
        <position position="75"/>
    </location>
    <ligand>
        <name>heme b</name>
        <dbReference type="ChEBI" id="CHEBI:60344"/>
        <label>b562</label>
    </ligand>
    <ligandPart>
        <name>Fe</name>
        <dbReference type="ChEBI" id="CHEBI:18248"/>
    </ligandPart>
</feature>
<feature type="binding site" description="axial binding residue" evidence="2">
    <location>
        <position position="89"/>
    </location>
    <ligand>
        <name>heme b</name>
        <dbReference type="ChEBI" id="CHEBI:60344"/>
        <label>b566</label>
    </ligand>
    <ligandPart>
        <name>Fe</name>
        <dbReference type="ChEBI" id="CHEBI:18248"/>
    </ligandPart>
</feature>
<feature type="binding site" description="axial binding residue" evidence="2">
    <location>
        <position position="174"/>
    </location>
    <ligand>
        <name>heme b</name>
        <dbReference type="ChEBI" id="CHEBI:60344"/>
        <label>b562</label>
    </ligand>
    <ligandPart>
        <name>Fe</name>
        <dbReference type="ChEBI" id="CHEBI:18248"/>
    </ligandPart>
</feature>
<feature type="binding site" description="axial binding residue" evidence="2">
    <location>
        <position position="188"/>
    </location>
    <ligand>
        <name>heme b</name>
        <dbReference type="ChEBI" id="CHEBI:60344"/>
        <label>b566</label>
    </ligand>
    <ligandPart>
        <name>Fe</name>
        <dbReference type="ChEBI" id="CHEBI:18248"/>
    </ligandPart>
</feature>
<feature type="binding site" evidence="2">
    <location>
        <position position="193"/>
    </location>
    <ligand>
        <name>a ubiquinone</name>
        <dbReference type="ChEBI" id="CHEBI:16389"/>
    </ligand>
</feature>
<accession>Q9MLK3</accession>
<gene>
    <name type="primary">MT-CYB</name>
    <name type="synonym">COB</name>
    <name type="synonym">CYTB</name>
    <name type="synonym">MTCYB</name>
</gene>